<sequence>AKDNFLRF</sequence>
<name>FAR1_RHOPR</name>
<dbReference type="iPTMnet" id="P85815"/>
<dbReference type="InParanoid" id="P85815"/>
<dbReference type="Proteomes" id="UP000015103">
    <property type="component" value="Unassembled WGS sequence"/>
</dbReference>
<dbReference type="GO" id="GO:0005576">
    <property type="term" value="C:extracellular region"/>
    <property type="evidence" value="ECO:0007669"/>
    <property type="project" value="UniProtKB-SubCell"/>
</dbReference>
<dbReference type="GO" id="GO:0007218">
    <property type="term" value="P:neuropeptide signaling pathway"/>
    <property type="evidence" value="ECO:0007669"/>
    <property type="project" value="UniProtKB-KW"/>
</dbReference>
<proteinExistence type="evidence at protein level"/>
<protein>
    <recommendedName>
        <fullName>FMRFamide-related protein 1</fullName>
        <shortName evidence="3">Rhopr-FLRFamide-1</shortName>
    </recommendedName>
</protein>
<feature type="peptide" id="PRO_0000365762" description="FMRFamide-related protein 1">
    <location>
        <begin position="1"/>
        <end position="8"/>
    </location>
</feature>
<feature type="modified residue" description="N-acetylalanine; partial" evidence="2">
    <location>
        <position position="1"/>
    </location>
</feature>
<feature type="modified residue" description="Phenylalanine amide" evidence="2">
    <location>
        <position position="8"/>
    </location>
</feature>
<feature type="unsure residue" description="L or I" evidence="2">
    <location>
        <position position="6"/>
    </location>
</feature>
<accession>P85815</accession>
<keyword id="KW-0007">Acetylation</keyword>
<keyword id="KW-0027">Amidation</keyword>
<keyword id="KW-0903">Direct protein sequencing</keyword>
<keyword id="KW-0527">Neuropeptide</keyword>
<keyword id="KW-1185">Reference proteome</keyword>
<keyword id="KW-0964">Secreted</keyword>
<reference evidence="4" key="1">
    <citation type="journal article" date="2009" name="Proteomics">
        <title>The neuropeptidome of Rhodnius prolixus brain.</title>
        <authorList>
            <person name="Ons S."/>
            <person name="Richter F."/>
            <person name="Urlaub H."/>
            <person name="Pomar R.R."/>
        </authorList>
    </citation>
    <scope>PROTEIN SEQUENCE</scope>
    <scope>MASS SPECTROMETRY</scope>
    <scope>ACETYLATION AT ALA-1</scope>
    <scope>AMIDATION AT PHE-8</scope>
    <source>
        <tissue evidence="2">Brain</tissue>
    </source>
</reference>
<organism>
    <name type="scientific">Rhodnius prolixus</name>
    <name type="common">Triatomid bug</name>
    <dbReference type="NCBI Taxonomy" id="13249"/>
    <lineage>
        <taxon>Eukaryota</taxon>
        <taxon>Metazoa</taxon>
        <taxon>Ecdysozoa</taxon>
        <taxon>Arthropoda</taxon>
        <taxon>Hexapoda</taxon>
        <taxon>Insecta</taxon>
        <taxon>Pterygota</taxon>
        <taxon>Neoptera</taxon>
        <taxon>Paraneoptera</taxon>
        <taxon>Hemiptera</taxon>
        <taxon>Heteroptera</taxon>
        <taxon>Panheteroptera</taxon>
        <taxon>Cimicomorpha</taxon>
        <taxon>Reduviidae</taxon>
        <taxon>Triatominae</taxon>
        <taxon>Rhodnius</taxon>
    </lineage>
</organism>
<evidence type="ECO:0000255" key="1"/>
<evidence type="ECO:0000269" key="2">
    <source>
    </source>
</evidence>
<evidence type="ECO:0000303" key="3">
    <source>
    </source>
</evidence>
<evidence type="ECO:0000305" key="4"/>
<comment type="subcellular location">
    <subcellularLocation>
        <location evidence="4">Secreted</location>
    </subcellularLocation>
</comment>
<comment type="PTM">
    <text evidence="2">Occurs in two forms, with unmodified Ala-1 and with acetylation at Ala-1.</text>
</comment>
<comment type="mass spectrometry">
    <text>Without acetylation at Ala-1.</text>
</comment>
<comment type="mass spectrometry">
    <text>With acetylation at Ala-1.</text>
</comment>
<comment type="similarity">
    <text evidence="1">Belongs to the FARP (FMRFamide related peptide) family.</text>
</comment>